<proteinExistence type="inferred from homology"/>
<reference key="1">
    <citation type="journal article" date="1999" name="Nature">
        <title>Sequence and analysis of chromosome 4 of the plant Arabidopsis thaliana.</title>
        <authorList>
            <person name="Mayer K.F.X."/>
            <person name="Schueller C."/>
            <person name="Wambutt R."/>
            <person name="Murphy G."/>
            <person name="Volckaert G."/>
            <person name="Pohl T."/>
            <person name="Duesterhoeft A."/>
            <person name="Stiekema W."/>
            <person name="Entian K.-D."/>
            <person name="Terryn N."/>
            <person name="Harris B."/>
            <person name="Ansorge W."/>
            <person name="Brandt P."/>
            <person name="Grivell L.A."/>
            <person name="Rieger M."/>
            <person name="Weichselgartner M."/>
            <person name="de Simone V."/>
            <person name="Obermaier B."/>
            <person name="Mache R."/>
            <person name="Mueller M."/>
            <person name="Kreis M."/>
            <person name="Delseny M."/>
            <person name="Puigdomenech P."/>
            <person name="Watson M."/>
            <person name="Schmidtheini T."/>
            <person name="Reichert B."/>
            <person name="Portetelle D."/>
            <person name="Perez-Alonso M."/>
            <person name="Boutry M."/>
            <person name="Bancroft I."/>
            <person name="Vos P."/>
            <person name="Hoheisel J."/>
            <person name="Zimmermann W."/>
            <person name="Wedler H."/>
            <person name="Ridley P."/>
            <person name="Langham S.-A."/>
            <person name="McCullagh B."/>
            <person name="Bilham L."/>
            <person name="Robben J."/>
            <person name="van der Schueren J."/>
            <person name="Grymonprez B."/>
            <person name="Chuang Y.-J."/>
            <person name="Vandenbussche F."/>
            <person name="Braeken M."/>
            <person name="Weltjens I."/>
            <person name="Voet M."/>
            <person name="Bastiaens I."/>
            <person name="Aert R."/>
            <person name="Defoor E."/>
            <person name="Weitzenegger T."/>
            <person name="Bothe G."/>
            <person name="Ramsperger U."/>
            <person name="Hilbert H."/>
            <person name="Braun M."/>
            <person name="Holzer E."/>
            <person name="Brandt A."/>
            <person name="Peters S."/>
            <person name="van Staveren M."/>
            <person name="Dirkse W."/>
            <person name="Mooijman P."/>
            <person name="Klein Lankhorst R."/>
            <person name="Rose M."/>
            <person name="Hauf J."/>
            <person name="Koetter P."/>
            <person name="Berneiser S."/>
            <person name="Hempel S."/>
            <person name="Feldpausch M."/>
            <person name="Lamberth S."/>
            <person name="Van den Daele H."/>
            <person name="De Keyser A."/>
            <person name="Buysshaert C."/>
            <person name="Gielen J."/>
            <person name="Villarroel R."/>
            <person name="De Clercq R."/>
            <person name="van Montagu M."/>
            <person name="Rogers J."/>
            <person name="Cronin A."/>
            <person name="Quail M.A."/>
            <person name="Bray-Allen S."/>
            <person name="Clark L."/>
            <person name="Doggett J."/>
            <person name="Hall S."/>
            <person name="Kay M."/>
            <person name="Lennard N."/>
            <person name="McLay K."/>
            <person name="Mayes R."/>
            <person name="Pettett A."/>
            <person name="Rajandream M.A."/>
            <person name="Lyne M."/>
            <person name="Benes V."/>
            <person name="Rechmann S."/>
            <person name="Borkova D."/>
            <person name="Bloecker H."/>
            <person name="Scharfe M."/>
            <person name="Grimm M."/>
            <person name="Loehnert T.-H."/>
            <person name="Dose S."/>
            <person name="de Haan M."/>
            <person name="Maarse A.C."/>
            <person name="Schaefer M."/>
            <person name="Mueller-Auer S."/>
            <person name="Gabel C."/>
            <person name="Fuchs M."/>
            <person name="Fartmann B."/>
            <person name="Granderath K."/>
            <person name="Dauner D."/>
            <person name="Herzl A."/>
            <person name="Neumann S."/>
            <person name="Argiriou A."/>
            <person name="Vitale D."/>
            <person name="Liguori R."/>
            <person name="Piravandi E."/>
            <person name="Massenet O."/>
            <person name="Quigley F."/>
            <person name="Clabauld G."/>
            <person name="Muendlein A."/>
            <person name="Felber R."/>
            <person name="Schnabl S."/>
            <person name="Hiller R."/>
            <person name="Schmidt W."/>
            <person name="Lecharny A."/>
            <person name="Aubourg S."/>
            <person name="Chefdor F."/>
            <person name="Cooke R."/>
            <person name="Berger C."/>
            <person name="Monfort A."/>
            <person name="Casacuberta E."/>
            <person name="Gibbons T."/>
            <person name="Weber N."/>
            <person name="Vandenbol M."/>
            <person name="Bargues M."/>
            <person name="Terol J."/>
            <person name="Torres A."/>
            <person name="Perez-Perez A."/>
            <person name="Purnelle B."/>
            <person name="Bent E."/>
            <person name="Johnson S."/>
            <person name="Tacon D."/>
            <person name="Jesse T."/>
            <person name="Heijnen L."/>
            <person name="Schwarz S."/>
            <person name="Scholler P."/>
            <person name="Heber S."/>
            <person name="Francs P."/>
            <person name="Bielke C."/>
            <person name="Frishman D."/>
            <person name="Haase D."/>
            <person name="Lemcke K."/>
            <person name="Mewes H.-W."/>
            <person name="Stocker S."/>
            <person name="Zaccaria P."/>
            <person name="Bevan M."/>
            <person name="Wilson R.K."/>
            <person name="de la Bastide M."/>
            <person name="Habermann K."/>
            <person name="Parnell L."/>
            <person name="Dedhia N."/>
            <person name="Gnoj L."/>
            <person name="Schutz K."/>
            <person name="Huang E."/>
            <person name="Spiegel L."/>
            <person name="Sekhon M."/>
            <person name="Murray J."/>
            <person name="Sheet P."/>
            <person name="Cordes M."/>
            <person name="Abu-Threideh J."/>
            <person name="Stoneking T."/>
            <person name="Kalicki J."/>
            <person name="Graves T."/>
            <person name="Harmon G."/>
            <person name="Edwards J."/>
            <person name="Latreille P."/>
            <person name="Courtney L."/>
            <person name="Cloud J."/>
            <person name="Abbott A."/>
            <person name="Scott K."/>
            <person name="Johnson D."/>
            <person name="Minx P."/>
            <person name="Bentley D."/>
            <person name="Fulton B."/>
            <person name="Miller N."/>
            <person name="Greco T."/>
            <person name="Kemp K."/>
            <person name="Kramer J."/>
            <person name="Fulton L."/>
            <person name="Mardis E."/>
            <person name="Dante M."/>
            <person name="Pepin K."/>
            <person name="Hillier L.W."/>
            <person name="Nelson J."/>
            <person name="Spieth J."/>
            <person name="Ryan E."/>
            <person name="Andrews S."/>
            <person name="Geisel C."/>
            <person name="Layman D."/>
            <person name="Du H."/>
            <person name="Ali J."/>
            <person name="Berghoff A."/>
            <person name="Jones K."/>
            <person name="Drone K."/>
            <person name="Cotton M."/>
            <person name="Joshu C."/>
            <person name="Antonoiu B."/>
            <person name="Zidanic M."/>
            <person name="Strong C."/>
            <person name="Sun H."/>
            <person name="Lamar B."/>
            <person name="Yordan C."/>
            <person name="Ma P."/>
            <person name="Zhong J."/>
            <person name="Preston R."/>
            <person name="Vil D."/>
            <person name="Shekher M."/>
            <person name="Matero A."/>
            <person name="Shah R."/>
            <person name="Swaby I.K."/>
            <person name="O'Shaughnessy A."/>
            <person name="Rodriguez M."/>
            <person name="Hoffman J."/>
            <person name="Till S."/>
            <person name="Granat S."/>
            <person name="Shohdy N."/>
            <person name="Hasegawa A."/>
            <person name="Hameed A."/>
            <person name="Lodhi M."/>
            <person name="Johnson A."/>
            <person name="Chen E."/>
            <person name="Marra M.A."/>
            <person name="Martienssen R."/>
            <person name="McCombie W.R."/>
        </authorList>
    </citation>
    <scope>NUCLEOTIDE SEQUENCE [LARGE SCALE GENOMIC DNA]</scope>
    <source>
        <strain>cv. Columbia</strain>
    </source>
</reference>
<reference key="2">
    <citation type="journal article" date="2017" name="Plant J.">
        <title>Araport11: a complete reannotation of the Arabidopsis thaliana reference genome.</title>
        <authorList>
            <person name="Cheng C.Y."/>
            <person name="Krishnakumar V."/>
            <person name="Chan A.P."/>
            <person name="Thibaud-Nissen F."/>
            <person name="Schobel S."/>
            <person name="Town C.D."/>
        </authorList>
    </citation>
    <scope>GENOME REANNOTATION</scope>
    <source>
        <strain>cv. Columbia</strain>
    </source>
</reference>
<reference key="3">
    <citation type="journal article" date="2013" name="Plant Mol. Biol.">
        <title>Coexpression patterns indicate that GPI-anchored non-specific lipid transfer proteins are involved in accumulation of cuticular wax, suberin and sporopollenin.</title>
        <authorList>
            <person name="Edstam M.M."/>
            <person name="Blomqvist K."/>
            <person name="Ekloef A."/>
            <person name="Wennergren U."/>
            <person name="Edqvist J."/>
        </authorList>
    </citation>
    <scope>GENE FAMILY</scope>
    <scope>NOMENCLATURE</scope>
    <source>
        <strain>cv. Columbia</strain>
    </source>
</reference>
<accession>Q9SUV6</accession>
<accession>O49646</accession>
<name>LTG34_ARATH</name>
<organism>
    <name type="scientific">Arabidopsis thaliana</name>
    <name type="common">Mouse-ear cress</name>
    <dbReference type="NCBI Taxonomy" id="3702"/>
    <lineage>
        <taxon>Eukaryota</taxon>
        <taxon>Viridiplantae</taxon>
        <taxon>Streptophyta</taxon>
        <taxon>Embryophyta</taxon>
        <taxon>Tracheophyta</taxon>
        <taxon>Spermatophyta</taxon>
        <taxon>Magnoliopsida</taxon>
        <taxon>eudicotyledons</taxon>
        <taxon>Gunneridae</taxon>
        <taxon>Pentapetalae</taxon>
        <taxon>rosids</taxon>
        <taxon>malvids</taxon>
        <taxon>Brassicales</taxon>
        <taxon>Brassicaceae</taxon>
        <taxon>Camelineae</taxon>
        <taxon>Arabidopsis</taxon>
    </lineage>
</organism>
<evidence type="ECO:0000250" key="1">
    <source>
        <dbReference type="UniProtKB" id="A0A0B4JDK1"/>
    </source>
</evidence>
<evidence type="ECO:0000250" key="2">
    <source>
        <dbReference type="UniProtKB" id="Q9C7F7"/>
    </source>
</evidence>
<evidence type="ECO:0000255" key="3"/>
<evidence type="ECO:0000256" key="4">
    <source>
        <dbReference type="SAM" id="MobiDB-lite"/>
    </source>
</evidence>
<evidence type="ECO:0000303" key="5">
    <source>
    </source>
</evidence>
<evidence type="ECO:0000305" key="6"/>
<evidence type="ECO:0000312" key="7">
    <source>
        <dbReference type="Araport" id="AT4G22650"/>
    </source>
</evidence>
<evidence type="ECO:0000312" key="8">
    <source>
        <dbReference type="EMBL" id="CAA16550.1"/>
    </source>
</evidence>
<sequence length="142" mass="15077">MAVAVTAVLFLAVVIAPQWTETKKPPRPSDTSDTSGTSGRDRRTMCPLSIPGIVQNCYATLNAFPSKECCKDLKTASKREVTCLCNNVIAHPDPLYTNTNQVNKACGVLDKYACDAGNSNGGATKKIVASMGLFGVVASLFF</sequence>
<comment type="function">
    <text evidence="2">Probable lipid transfer protein.</text>
</comment>
<comment type="subcellular location">
    <subcellularLocation>
        <location evidence="3">Cell membrane</location>
        <topology evidence="3">Lipid-anchor</topology>
        <topology evidence="3">GPI-anchor</topology>
    </subcellularLocation>
</comment>
<comment type="similarity">
    <text evidence="6">Belongs to the plant LTP family.</text>
</comment>
<comment type="sequence caution" evidence="6">
    <conflict type="erroneous gene model prediction">
        <sequence resource="EMBL-CDS" id="AEE84634"/>
    </conflict>
</comment>
<comment type="sequence caution" evidence="6">
    <conflict type="erroneous gene model prediction">
        <sequence resource="EMBL-CDS" id="CAA16550"/>
    </conflict>
</comment>
<comment type="sequence caution" evidence="6">
    <conflict type="erroneous gene model prediction">
        <sequence resource="EMBL-CDS" id="CAA22170"/>
    </conflict>
</comment>
<comment type="sequence caution" evidence="6">
    <conflict type="erroneous gene model prediction">
        <sequence resource="EMBL-CDS" id="CAB79220"/>
    </conflict>
</comment>
<gene>
    <name evidence="5" type="primary">LTPG34</name>
    <name evidence="7" type="ordered locus">At4g22650</name>
    <name evidence="8" type="ORF">T12H17.40</name>
</gene>
<dbReference type="EMBL" id="AL021635">
    <property type="protein sequence ID" value="CAA16550.1"/>
    <property type="status" value="ALT_SEQ"/>
    <property type="molecule type" value="Genomic_DNA"/>
</dbReference>
<dbReference type="EMBL" id="AL033545">
    <property type="protein sequence ID" value="CAA22170.1"/>
    <property type="status" value="ALT_SEQ"/>
    <property type="molecule type" value="Genomic_DNA"/>
</dbReference>
<dbReference type="EMBL" id="AL161557">
    <property type="protein sequence ID" value="CAB79220.1"/>
    <property type="status" value="ALT_SEQ"/>
    <property type="molecule type" value="Genomic_DNA"/>
</dbReference>
<dbReference type="EMBL" id="CP002687">
    <property type="protein sequence ID" value="AEE84634.1"/>
    <property type="status" value="ALT_SEQ"/>
    <property type="molecule type" value="Genomic_DNA"/>
</dbReference>
<dbReference type="PIR" id="D85259">
    <property type="entry name" value="D85259"/>
</dbReference>
<dbReference type="PIR" id="T04560">
    <property type="entry name" value="T04560"/>
</dbReference>
<dbReference type="RefSeq" id="NP_193996.1">
    <property type="nucleotide sequence ID" value="NM_118391.1"/>
</dbReference>
<dbReference type="PaxDb" id="3702-AT4G22650.1"/>
<dbReference type="GeneID" id="828361"/>
<dbReference type="KEGG" id="ath:AT4G22650"/>
<dbReference type="Araport" id="AT4G22650"/>
<dbReference type="TAIR" id="AT4G22650"/>
<dbReference type="HOGENOM" id="CLU_1689128_0_0_1"/>
<dbReference type="InParanoid" id="Q9SUV6"/>
<dbReference type="PRO" id="PR:Q9SUV6"/>
<dbReference type="Proteomes" id="UP000006548">
    <property type="component" value="Chromosome 4"/>
</dbReference>
<dbReference type="ExpressionAtlas" id="Q9SUV6">
    <property type="expression patterns" value="baseline and differential"/>
</dbReference>
<dbReference type="GO" id="GO:0005886">
    <property type="term" value="C:plasma membrane"/>
    <property type="evidence" value="ECO:0007669"/>
    <property type="project" value="UniProtKB-SubCell"/>
</dbReference>
<dbReference type="GO" id="GO:0098552">
    <property type="term" value="C:side of membrane"/>
    <property type="evidence" value="ECO:0007669"/>
    <property type="project" value="UniProtKB-KW"/>
</dbReference>
<dbReference type="CDD" id="cd00010">
    <property type="entry name" value="AAI_LTSS"/>
    <property type="match status" value="1"/>
</dbReference>
<dbReference type="InterPro" id="IPR036312">
    <property type="entry name" value="Bifun_inhib/LTP/seed_sf"/>
</dbReference>
<dbReference type="InterPro" id="IPR016140">
    <property type="entry name" value="Bifunc_inhib/LTP/seed_store"/>
</dbReference>
<dbReference type="Pfam" id="PF14368">
    <property type="entry name" value="LTP_2"/>
    <property type="match status" value="1"/>
</dbReference>
<dbReference type="SUPFAM" id="SSF47699">
    <property type="entry name" value="Bifunctional inhibitor/lipid-transfer protein/seed storage 2S albumin"/>
    <property type="match status" value="1"/>
</dbReference>
<protein>
    <recommendedName>
        <fullName evidence="5">Non-specific lipid transfer protein GPI-anchored 34</fullName>
        <shortName evidence="5">AtLTPG-34</shortName>
        <shortName evidence="5">Protein LTP-GPI-ANCHORED 34</shortName>
    </recommendedName>
</protein>
<keyword id="KW-1003">Cell membrane</keyword>
<keyword id="KW-1015">Disulfide bond</keyword>
<keyword id="KW-0325">Glycoprotein</keyword>
<keyword id="KW-0336">GPI-anchor</keyword>
<keyword id="KW-0449">Lipoprotein</keyword>
<keyword id="KW-0472">Membrane</keyword>
<keyword id="KW-1185">Reference proteome</keyword>
<keyword id="KW-0732">Signal</keyword>
<feature type="signal peptide" evidence="3">
    <location>
        <begin position="1"/>
        <end position="22"/>
    </location>
</feature>
<feature type="chain" id="PRO_5014313322" description="Non-specific lipid transfer protein GPI-anchored 34">
    <location>
        <begin position="23"/>
        <end position="120"/>
    </location>
</feature>
<feature type="propeptide" id="PRO_0000451663" description="Removed in mature form" evidence="3">
    <location>
        <begin position="121"/>
        <end position="142"/>
    </location>
</feature>
<feature type="region of interest" description="Disordered" evidence="4">
    <location>
        <begin position="21"/>
        <end position="43"/>
    </location>
</feature>
<feature type="compositionally biased region" description="Low complexity" evidence="4">
    <location>
        <begin position="29"/>
        <end position="38"/>
    </location>
</feature>
<feature type="lipid moiety-binding region" description="GPI-anchor amidated asparagine" evidence="3">
    <location>
        <position position="120"/>
    </location>
</feature>
<feature type="disulfide bond" evidence="1">
    <location>
        <begin position="46"/>
        <end position="85"/>
    </location>
</feature>
<feature type="disulfide bond" evidence="1">
    <location>
        <begin position="57"/>
        <end position="69"/>
    </location>
</feature>
<feature type="disulfide bond" evidence="1">
    <location>
        <begin position="70"/>
        <end position="106"/>
    </location>
</feature>
<feature type="disulfide bond" evidence="1">
    <location>
        <begin position="83"/>
        <end position="114"/>
    </location>
</feature>